<accession>Q9T3S9</accession>
<organism>
    <name type="scientific">Brachyuromys betsileoensis</name>
    <name type="common">Betsileo short-tailed rat</name>
    <dbReference type="NCBI Taxonomy" id="107272"/>
    <lineage>
        <taxon>Eukaryota</taxon>
        <taxon>Metazoa</taxon>
        <taxon>Chordata</taxon>
        <taxon>Craniata</taxon>
        <taxon>Vertebrata</taxon>
        <taxon>Euteleostomi</taxon>
        <taxon>Mammalia</taxon>
        <taxon>Eutheria</taxon>
        <taxon>Euarchontoglires</taxon>
        <taxon>Glires</taxon>
        <taxon>Rodentia</taxon>
        <taxon>Myomorpha</taxon>
        <taxon>Muroidea</taxon>
        <taxon>Nesomyidae</taxon>
        <taxon>Nesomyinae</taxon>
        <taxon>Brachyuromys</taxon>
    </lineage>
</organism>
<keyword id="KW-0249">Electron transport</keyword>
<keyword id="KW-0349">Heme</keyword>
<keyword id="KW-0408">Iron</keyword>
<keyword id="KW-0472">Membrane</keyword>
<keyword id="KW-0479">Metal-binding</keyword>
<keyword id="KW-0496">Mitochondrion</keyword>
<keyword id="KW-0999">Mitochondrion inner membrane</keyword>
<keyword id="KW-0679">Respiratory chain</keyword>
<keyword id="KW-0812">Transmembrane</keyword>
<keyword id="KW-1133">Transmembrane helix</keyword>
<keyword id="KW-0813">Transport</keyword>
<keyword id="KW-0830">Ubiquinone</keyword>
<reference key="1">
    <citation type="journal article" date="1999" name="Cladistics">
        <title>Molecular phylogeny and biogeography of Madagascar's native rodents (Muridae: Nesomyinae): a test of the single origin hypothesis.</title>
        <authorList>
            <person name="Jansa S.A."/>
            <person name="Goodman S.M."/>
            <person name="Tucker P.K."/>
        </authorList>
    </citation>
    <scope>NUCLEOTIDE SEQUENCE [GENOMIC DNA]</scope>
    <source>
        <strain>Isolate Bubet591</strain>
        <strain>Isolate Bubet592</strain>
    </source>
</reference>
<evidence type="ECO:0000250" key="1"/>
<evidence type="ECO:0000250" key="2">
    <source>
        <dbReference type="UniProtKB" id="P00157"/>
    </source>
</evidence>
<evidence type="ECO:0000255" key="3">
    <source>
        <dbReference type="PROSITE-ProRule" id="PRU00967"/>
    </source>
</evidence>
<evidence type="ECO:0000255" key="4">
    <source>
        <dbReference type="PROSITE-ProRule" id="PRU00968"/>
    </source>
</evidence>
<gene>
    <name type="primary">MT-CYB</name>
    <name type="synonym">COB</name>
    <name type="synonym">CYTB</name>
    <name type="synonym">MTCYB</name>
</gene>
<name>CYB_BRABT</name>
<protein>
    <recommendedName>
        <fullName>Cytochrome b</fullName>
    </recommendedName>
    <alternativeName>
        <fullName>Complex III subunit 3</fullName>
    </alternativeName>
    <alternativeName>
        <fullName>Complex III subunit III</fullName>
    </alternativeName>
    <alternativeName>
        <fullName>Cytochrome b-c1 complex subunit 3</fullName>
    </alternativeName>
    <alternativeName>
        <fullName>Ubiquinol-cytochrome-c reductase complex cytochrome b subunit</fullName>
    </alternativeName>
</protein>
<proteinExistence type="inferred from homology"/>
<sequence length="380" mass="42816">MTNIRKSHPLLKIINHSFIDLPTPSNISSWWNFGSLLGVCLMLQIVTGLFLAMHYTSDTSTAFSSVAHICRDVNYGWLIRYMHANGASMFFICLFIHVGRGVYYGSYTFMETWNIGIILMFAVMATAFMGYVLPWGQMSFWGATVITNLLSAVPYIGPALVEWIWGGFSVDKATLTRFFAFHFILPFIIAALAMVHLLFLHETGSNNPSGLNSDSDKIPFHPYYTMKDLLGVILLILALTLLVLFFPDLLGDPDNYTPANPLNTPPHIKPEWYFLFAYAILRSIPNKLGGVLALVLSILILALLPFLHTSKQRSLMFRPITQTLYWILAADLFTLTWIGGQPVEYPFVIIGQLASILYFSIILVFMPISGHIENKILKLE</sequence>
<geneLocation type="mitochondrion"/>
<comment type="function">
    <text evidence="2">Component of the ubiquinol-cytochrome c reductase complex (complex III or cytochrome b-c1 complex) that is part of the mitochondrial respiratory chain. The b-c1 complex mediates electron transfer from ubiquinol to cytochrome c. Contributes to the generation of a proton gradient across the mitochondrial membrane that is then used for ATP synthesis.</text>
</comment>
<comment type="cofactor">
    <cofactor evidence="2">
        <name>heme b</name>
        <dbReference type="ChEBI" id="CHEBI:60344"/>
    </cofactor>
    <text evidence="2">Binds 2 heme b groups non-covalently.</text>
</comment>
<comment type="subunit">
    <text evidence="2">The cytochrome bc1 complex contains 11 subunits: 3 respiratory subunits (MT-CYB, CYC1 and UQCRFS1), 2 core proteins (UQCRC1 and UQCRC2) and 6 low-molecular weight proteins (UQCRH/QCR6, UQCRB/QCR7, UQCRQ/QCR8, UQCR10/QCR9, UQCR11/QCR10 and a cleavage product of UQCRFS1). This cytochrome bc1 complex then forms a dimer.</text>
</comment>
<comment type="subcellular location">
    <subcellularLocation>
        <location evidence="2">Mitochondrion inner membrane</location>
        <topology evidence="2">Multi-pass membrane protein</topology>
    </subcellularLocation>
</comment>
<comment type="miscellaneous">
    <text evidence="1">Heme 1 (or BL or b562) is low-potential and absorbs at about 562 nm, and heme 2 (or BH or b566) is high-potential and absorbs at about 566 nm.</text>
</comment>
<comment type="similarity">
    <text evidence="3 4">Belongs to the cytochrome b family.</text>
</comment>
<comment type="caution">
    <text evidence="2">The full-length protein contains only eight transmembrane helices, not nine as predicted by bioinformatics tools.</text>
</comment>
<dbReference type="EMBL" id="AF160517">
    <property type="protein sequence ID" value="AAF15133.1"/>
    <property type="molecule type" value="Genomic_DNA"/>
</dbReference>
<dbReference type="EMBL" id="AF160518">
    <property type="protein sequence ID" value="AAF15134.1"/>
    <property type="molecule type" value="Genomic_DNA"/>
</dbReference>
<dbReference type="SMR" id="Q9T3S9"/>
<dbReference type="GO" id="GO:0005743">
    <property type="term" value="C:mitochondrial inner membrane"/>
    <property type="evidence" value="ECO:0007669"/>
    <property type="project" value="UniProtKB-SubCell"/>
</dbReference>
<dbReference type="GO" id="GO:0045275">
    <property type="term" value="C:respiratory chain complex III"/>
    <property type="evidence" value="ECO:0007669"/>
    <property type="project" value="InterPro"/>
</dbReference>
<dbReference type="GO" id="GO:0046872">
    <property type="term" value="F:metal ion binding"/>
    <property type="evidence" value="ECO:0007669"/>
    <property type="project" value="UniProtKB-KW"/>
</dbReference>
<dbReference type="GO" id="GO:0008121">
    <property type="term" value="F:ubiquinol-cytochrome-c reductase activity"/>
    <property type="evidence" value="ECO:0007669"/>
    <property type="project" value="InterPro"/>
</dbReference>
<dbReference type="GO" id="GO:0006122">
    <property type="term" value="P:mitochondrial electron transport, ubiquinol to cytochrome c"/>
    <property type="evidence" value="ECO:0007669"/>
    <property type="project" value="TreeGrafter"/>
</dbReference>
<dbReference type="CDD" id="cd00290">
    <property type="entry name" value="cytochrome_b_C"/>
    <property type="match status" value="1"/>
</dbReference>
<dbReference type="CDD" id="cd00284">
    <property type="entry name" value="Cytochrome_b_N"/>
    <property type="match status" value="1"/>
</dbReference>
<dbReference type="FunFam" id="1.20.810.10:FF:000002">
    <property type="entry name" value="Cytochrome b"/>
    <property type="match status" value="1"/>
</dbReference>
<dbReference type="Gene3D" id="1.20.810.10">
    <property type="entry name" value="Cytochrome Bc1 Complex, Chain C"/>
    <property type="match status" value="1"/>
</dbReference>
<dbReference type="InterPro" id="IPR005798">
    <property type="entry name" value="Cyt_b/b6_C"/>
</dbReference>
<dbReference type="InterPro" id="IPR036150">
    <property type="entry name" value="Cyt_b/b6_C_sf"/>
</dbReference>
<dbReference type="InterPro" id="IPR005797">
    <property type="entry name" value="Cyt_b/b6_N"/>
</dbReference>
<dbReference type="InterPro" id="IPR027387">
    <property type="entry name" value="Cytb/b6-like_sf"/>
</dbReference>
<dbReference type="InterPro" id="IPR030689">
    <property type="entry name" value="Cytochrome_b"/>
</dbReference>
<dbReference type="InterPro" id="IPR048260">
    <property type="entry name" value="Cytochrome_b_C_euk/bac"/>
</dbReference>
<dbReference type="InterPro" id="IPR048259">
    <property type="entry name" value="Cytochrome_b_N_euk/bac"/>
</dbReference>
<dbReference type="InterPro" id="IPR016174">
    <property type="entry name" value="Di-haem_cyt_TM"/>
</dbReference>
<dbReference type="PANTHER" id="PTHR19271">
    <property type="entry name" value="CYTOCHROME B"/>
    <property type="match status" value="1"/>
</dbReference>
<dbReference type="PANTHER" id="PTHR19271:SF16">
    <property type="entry name" value="CYTOCHROME B"/>
    <property type="match status" value="1"/>
</dbReference>
<dbReference type="Pfam" id="PF00032">
    <property type="entry name" value="Cytochrom_B_C"/>
    <property type="match status" value="1"/>
</dbReference>
<dbReference type="Pfam" id="PF00033">
    <property type="entry name" value="Cytochrome_B"/>
    <property type="match status" value="1"/>
</dbReference>
<dbReference type="PIRSF" id="PIRSF038885">
    <property type="entry name" value="COB"/>
    <property type="match status" value="1"/>
</dbReference>
<dbReference type="SUPFAM" id="SSF81648">
    <property type="entry name" value="a domain/subunit of cytochrome bc1 complex (Ubiquinol-cytochrome c reductase)"/>
    <property type="match status" value="1"/>
</dbReference>
<dbReference type="SUPFAM" id="SSF81342">
    <property type="entry name" value="Transmembrane di-heme cytochromes"/>
    <property type="match status" value="1"/>
</dbReference>
<dbReference type="PROSITE" id="PS51003">
    <property type="entry name" value="CYTB_CTER"/>
    <property type="match status" value="1"/>
</dbReference>
<dbReference type="PROSITE" id="PS51002">
    <property type="entry name" value="CYTB_NTER"/>
    <property type="match status" value="1"/>
</dbReference>
<feature type="chain" id="PRO_0000060688" description="Cytochrome b">
    <location>
        <begin position="1"/>
        <end position="380"/>
    </location>
</feature>
<feature type="transmembrane region" description="Helical" evidence="2">
    <location>
        <begin position="33"/>
        <end position="53"/>
    </location>
</feature>
<feature type="transmembrane region" description="Helical" evidence="2">
    <location>
        <begin position="77"/>
        <end position="98"/>
    </location>
</feature>
<feature type="transmembrane region" description="Helical" evidence="2">
    <location>
        <begin position="113"/>
        <end position="133"/>
    </location>
</feature>
<feature type="transmembrane region" description="Helical" evidence="2">
    <location>
        <begin position="178"/>
        <end position="198"/>
    </location>
</feature>
<feature type="transmembrane region" description="Helical" evidence="2">
    <location>
        <begin position="226"/>
        <end position="246"/>
    </location>
</feature>
<feature type="transmembrane region" description="Helical" evidence="2">
    <location>
        <begin position="288"/>
        <end position="308"/>
    </location>
</feature>
<feature type="transmembrane region" description="Helical" evidence="2">
    <location>
        <begin position="320"/>
        <end position="340"/>
    </location>
</feature>
<feature type="transmembrane region" description="Helical" evidence="2">
    <location>
        <begin position="347"/>
        <end position="367"/>
    </location>
</feature>
<feature type="binding site" description="axial binding residue" evidence="2">
    <location>
        <position position="83"/>
    </location>
    <ligand>
        <name>heme b</name>
        <dbReference type="ChEBI" id="CHEBI:60344"/>
        <label>b562</label>
    </ligand>
    <ligandPart>
        <name>Fe</name>
        <dbReference type="ChEBI" id="CHEBI:18248"/>
    </ligandPart>
</feature>
<feature type="binding site" description="axial binding residue" evidence="2">
    <location>
        <position position="97"/>
    </location>
    <ligand>
        <name>heme b</name>
        <dbReference type="ChEBI" id="CHEBI:60344"/>
        <label>b566</label>
    </ligand>
    <ligandPart>
        <name>Fe</name>
        <dbReference type="ChEBI" id="CHEBI:18248"/>
    </ligandPart>
</feature>
<feature type="binding site" description="axial binding residue" evidence="2">
    <location>
        <position position="182"/>
    </location>
    <ligand>
        <name>heme b</name>
        <dbReference type="ChEBI" id="CHEBI:60344"/>
        <label>b562</label>
    </ligand>
    <ligandPart>
        <name>Fe</name>
        <dbReference type="ChEBI" id="CHEBI:18248"/>
    </ligandPart>
</feature>
<feature type="binding site" description="axial binding residue" evidence="2">
    <location>
        <position position="196"/>
    </location>
    <ligand>
        <name>heme b</name>
        <dbReference type="ChEBI" id="CHEBI:60344"/>
        <label>b566</label>
    </ligand>
    <ligandPart>
        <name>Fe</name>
        <dbReference type="ChEBI" id="CHEBI:18248"/>
    </ligandPart>
</feature>
<feature type="binding site" evidence="2">
    <location>
        <position position="201"/>
    </location>
    <ligand>
        <name>a ubiquinone</name>
        <dbReference type="ChEBI" id="CHEBI:16389"/>
    </ligand>
</feature>